<comment type="function">
    <text evidence="1">Cell wall formation. Catalyzes the addition of glutamate to the nucleotide precursor UDP-N-acetylmuramoyl-L-alanine (UMA).</text>
</comment>
<comment type="catalytic activity">
    <reaction evidence="1">
        <text>UDP-N-acetyl-alpha-D-muramoyl-L-alanine + D-glutamate + ATP = UDP-N-acetyl-alpha-D-muramoyl-L-alanyl-D-glutamate + ADP + phosphate + H(+)</text>
        <dbReference type="Rhea" id="RHEA:16429"/>
        <dbReference type="ChEBI" id="CHEBI:15378"/>
        <dbReference type="ChEBI" id="CHEBI:29986"/>
        <dbReference type="ChEBI" id="CHEBI:30616"/>
        <dbReference type="ChEBI" id="CHEBI:43474"/>
        <dbReference type="ChEBI" id="CHEBI:83898"/>
        <dbReference type="ChEBI" id="CHEBI:83900"/>
        <dbReference type="ChEBI" id="CHEBI:456216"/>
        <dbReference type="EC" id="6.3.2.9"/>
    </reaction>
</comment>
<comment type="pathway">
    <text evidence="1">Cell wall biogenesis; peptidoglycan biosynthesis.</text>
</comment>
<comment type="subcellular location">
    <subcellularLocation>
        <location evidence="1">Cytoplasm</location>
    </subcellularLocation>
</comment>
<comment type="similarity">
    <text evidence="1">Belongs to the MurCDEF family.</text>
</comment>
<dbReference type="EC" id="6.3.2.9" evidence="1"/>
<dbReference type="EMBL" id="CP000305">
    <property type="protein sequence ID" value="ABG16751.1"/>
    <property type="molecule type" value="Genomic_DNA"/>
</dbReference>
<dbReference type="EMBL" id="ACNQ01000006">
    <property type="protein sequence ID" value="EEO78207.1"/>
    <property type="molecule type" value="Genomic_DNA"/>
</dbReference>
<dbReference type="RefSeq" id="WP_002210436.1">
    <property type="nucleotide sequence ID" value="NZ_ACNQ01000006.1"/>
</dbReference>
<dbReference type="SMR" id="Q1CMM9"/>
<dbReference type="GeneID" id="57974062"/>
<dbReference type="KEGG" id="ypn:YPN_0419"/>
<dbReference type="HOGENOM" id="CLU_032540_1_0_6"/>
<dbReference type="UniPathway" id="UPA00219"/>
<dbReference type="Proteomes" id="UP000008936">
    <property type="component" value="Chromosome"/>
</dbReference>
<dbReference type="GO" id="GO:0005737">
    <property type="term" value="C:cytoplasm"/>
    <property type="evidence" value="ECO:0007669"/>
    <property type="project" value="UniProtKB-SubCell"/>
</dbReference>
<dbReference type="GO" id="GO:0005524">
    <property type="term" value="F:ATP binding"/>
    <property type="evidence" value="ECO:0007669"/>
    <property type="project" value="UniProtKB-UniRule"/>
</dbReference>
<dbReference type="GO" id="GO:0008764">
    <property type="term" value="F:UDP-N-acetylmuramoylalanine-D-glutamate ligase activity"/>
    <property type="evidence" value="ECO:0007669"/>
    <property type="project" value="UniProtKB-UniRule"/>
</dbReference>
<dbReference type="GO" id="GO:0051301">
    <property type="term" value="P:cell division"/>
    <property type="evidence" value="ECO:0007669"/>
    <property type="project" value="UniProtKB-KW"/>
</dbReference>
<dbReference type="GO" id="GO:0071555">
    <property type="term" value="P:cell wall organization"/>
    <property type="evidence" value="ECO:0007669"/>
    <property type="project" value="UniProtKB-KW"/>
</dbReference>
<dbReference type="GO" id="GO:0009252">
    <property type="term" value="P:peptidoglycan biosynthetic process"/>
    <property type="evidence" value="ECO:0007669"/>
    <property type="project" value="UniProtKB-UniRule"/>
</dbReference>
<dbReference type="GO" id="GO:0008360">
    <property type="term" value="P:regulation of cell shape"/>
    <property type="evidence" value="ECO:0007669"/>
    <property type="project" value="UniProtKB-KW"/>
</dbReference>
<dbReference type="FunFam" id="3.40.1190.10:FF:000002">
    <property type="entry name" value="UDP-N-acetylmuramoylalanine--D-glutamate ligase"/>
    <property type="match status" value="1"/>
</dbReference>
<dbReference type="Gene3D" id="3.90.190.20">
    <property type="entry name" value="Mur ligase, C-terminal domain"/>
    <property type="match status" value="1"/>
</dbReference>
<dbReference type="Gene3D" id="3.40.1190.10">
    <property type="entry name" value="Mur-like, catalytic domain"/>
    <property type="match status" value="1"/>
</dbReference>
<dbReference type="Gene3D" id="3.40.50.720">
    <property type="entry name" value="NAD(P)-binding Rossmann-like Domain"/>
    <property type="match status" value="1"/>
</dbReference>
<dbReference type="HAMAP" id="MF_00639">
    <property type="entry name" value="MurD"/>
    <property type="match status" value="1"/>
</dbReference>
<dbReference type="InterPro" id="IPR036565">
    <property type="entry name" value="Mur-like_cat_sf"/>
</dbReference>
<dbReference type="InterPro" id="IPR004101">
    <property type="entry name" value="Mur_ligase_C"/>
</dbReference>
<dbReference type="InterPro" id="IPR036615">
    <property type="entry name" value="Mur_ligase_C_dom_sf"/>
</dbReference>
<dbReference type="InterPro" id="IPR013221">
    <property type="entry name" value="Mur_ligase_cen"/>
</dbReference>
<dbReference type="InterPro" id="IPR005762">
    <property type="entry name" value="MurD"/>
</dbReference>
<dbReference type="NCBIfam" id="TIGR01087">
    <property type="entry name" value="murD"/>
    <property type="match status" value="1"/>
</dbReference>
<dbReference type="PANTHER" id="PTHR43692">
    <property type="entry name" value="UDP-N-ACETYLMURAMOYLALANINE--D-GLUTAMATE LIGASE"/>
    <property type="match status" value="1"/>
</dbReference>
<dbReference type="PANTHER" id="PTHR43692:SF1">
    <property type="entry name" value="UDP-N-ACETYLMURAMOYLALANINE--D-GLUTAMATE LIGASE"/>
    <property type="match status" value="1"/>
</dbReference>
<dbReference type="Pfam" id="PF02875">
    <property type="entry name" value="Mur_ligase_C"/>
    <property type="match status" value="1"/>
</dbReference>
<dbReference type="Pfam" id="PF08245">
    <property type="entry name" value="Mur_ligase_M"/>
    <property type="match status" value="1"/>
</dbReference>
<dbReference type="Pfam" id="PF21799">
    <property type="entry name" value="MurD-like_N"/>
    <property type="match status" value="1"/>
</dbReference>
<dbReference type="SUPFAM" id="SSF51984">
    <property type="entry name" value="MurCD N-terminal domain"/>
    <property type="match status" value="1"/>
</dbReference>
<dbReference type="SUPFAM" id="SSF53623">
    <property type="entry name" value="MurD-like peptide ligases, catalytic domain"/>
    <property type="match status" value="1"/>
</dbReference>
<dbReference type="SUPFAM" id="SSF53244">
    <property type="entry name" value="MurD-like peptide ligases, peptide-binding domain"/>
    <property type="match status" value="1"/>
</dbReference>
<evidence type="ECO:0000255" key="1">
    <source>
        <dbReference type="HAMAP-Rule" id="MF_00639"/>
    </source>
</evidence>
<protein>
    <recommendedName>
        <fullName evidence="1">UDP-N-acetylmuramoylalanine--D-glutamate ligase</fullName>
        <ecNumber evidence="1">6.3.2.9</ecNumber>
    </recommendedName>
    <alternativeName>
        <fullName evidence="1">D-glutamic acid-adding enzyme</fullName>
    </alternativeName>
    <alternativeName>
        <fullName evidence="1">UDP-N-acetylmuramoyl-L-alanyl-D-glutamate synthetase</fullName>
    </alternativeName>
</protein>
<gene>
    <name evidence="1" type="primary">murD</name>
    <name type="ordered locus">YPN_0419</name>
    <name type="ORF">YP516_0433</name>
</gene>
<organism>
    <name type="scientific">Yersinia pestis bv. Antiqua (strain Nepal516)</name>
    <dbReference type="NCBI Taxonomy" id="377628"/>
    <lineage>
        <taxon>Bacteria</taxon>
        <taxon>Pseudomonadati</taxon>
        <taxon>Pseudomonadota</taxon>
        <taxon>Gammaproteobacteria</taxon>
        <taxon>Enterobacterales</taxon>
        <taxon>Yersiniaceae</taxon>
        <taxon>Yersinia</taxon>
    </lineage>
</organism>
<keyword id="KW-0067">ATP-binding</keyword>
<keyword id="KW-0131">Cell cycle</keyword>
<keyword id="KW-0132">Cell division</keyword>
<keyword id="KW-0133">Cell shape</keyword>
<keyword id="KW-0961">Cell wall biogenesis/degradation</keyword>
<keyword id="KW-0963">Cytoplasm</keyword>
<keyword id="KW-0436">Ligase</keyword>
<keyword id="KW-0547">Nucleotide-binding</keyword>
<keyword id="KW-0573">Peptidoglycan synthesis</keyword>
<accession>Q1CMM9</accession>
<accession>C4GNX5</accession>
<name>MURD_YERPN</name>
<proteinExistence type="inferred from homology"/>
<feature type="chain" id="PRO_0000257265" description="UDP-N-acetylmuramoylalanine--D-glutamate ligase">
    <location>
        <begin position="1"/>
        <end position="438"/>
    </location>
</feature>
<feature type="binding site" evidence="1">
    <location>
        <begin position="112"/>
        <end position="118"/>
    </location>
    <ligand>
        <name>ATP</name>
        <dbReference type="ChEBI" id="CHEBI:30616"/>
    </ligand>
</feature>
<reference key="1">
    <citation type="journal article" date="2006" name="J. Bacteriol.">
        <title>Complete genome sequence of Yersinia pestis strains Antiqua and Nepal516: evidence of gene reduction in an emerging pathogen.</title>
        <authorList>
            <person name="Chain P.S.G."/>
            <person name="Hu P."/>
            <person name="Malfatti S.A."/>
            <person name="Radnedge L."/>
            <person name="Larimer F."/>
            <person name="Vergez L.M."/>
            <person name="Worsham P."/>
            <person name="Chu M.C."/>
            <person name="Andersen G.L."/>
        </authorList>
    </citation>
    <scope>NUCLEOTIDE SEQUENCE [LARGE SCALE GENOMIC DNA]</scope>
    <source>
        <strain>Nepal516</strain>
    </source>
</reference>
<reference key="2">
    <citation type="submission" date="2009-04" db="EMBL/GenBank/DDBJ databases">
        <title>Yersinia pestis Nepal516A whole genome shotgun sequencing project.</title>
        <authorList>
            <person name="Plunkett G. III"/>
            <person name="Anderson B.D."/>
            <person name="Baumler D.J."/>
            <person name="Burland V."/>
            <person name="Cabot E.L."/>
            <person name="Glasner J.D."/>
            <person name="Mau B."/>
            <person name="Neeno-Eckwall E."/>
            <person name="Perna N.T."/>
            <person name="Munk A.C."/>
            <person name="Tapia R."/>
            <person name="Green L.D."/>
            <person name="Rogers Y.C."/>
            <person name="Detter J.C."/>
            <person name="Bruce D.C."/>
            <person name="Brettin T.S."/>
        </authorList>
    </citation>
    <scope>NUCLEOTIDE SEQUENCE [LARGE SCALE GENOMIC DNA]</scope>
    <source>
        <strain>Nepal516</strain>
    </source>
</reference>
<sequence>MVDYQGKKVVIIGLGLTGLSCVDFFIARGVTPRVMDTRINPPGLDQLPESVEQHVGDLNQEWLLDADLIVVSPGMALAHPALSEAAEAGVEIIGDIELFCRENQAPVVAITGSNGKSTVTTLVGEMAKAAGWSVGGGGNIGVPALTLLKQDNQLTVLELSSFQLETTHSLRASAATILNVTEDHTDRYPLGLQQYRAAKLRVYENAKVCVVNADDALTMPVRGADSRCISFGVDVGDYHLNKQQGEIWLRVRGEKVLNTREMKLSGRHNYTNALAALALADAVGIPRASSLKALTTFSGLPHRFQLVLERHGVRWINDSKATNVGSTEAALDGLQVDGTLHLLLGGDGKSADFSGLTHFLQGDRIKVYCFGRDGGQLAALRPDVSQLTETMAQAMALVAKVVLPGDRVLLSPACASLDQFRSFEHRGNEFARLAEELG</sequence>